<keyword id="KW-0067">ATP-binding</keyword>
<keyword id="KW-0131">Cell cycle</keyword>
<keyword id="KW-0132">Cell division</keyword>
<keyword id="KW-0133">Cell shape</keyword>
<keyword id="KW-0961">Cell wall biogenesis/degradation</keyword>
<keyword id="KW-0963">Cytoplasm</keyword>
<keyword id="KW-0436">Ligase</keyword>
<keyword id="KW-0547">Nucleotide-binding</keyword>
<keyword id="KW-0573">Peptidoglycan synthesis</keyword>
<feature type="chain" id="PRO_1000130833" description="UDP-N-acetylmuramoylalanine--D-glutamate ligase">
    <location>
        <begin position="1"/>
        <end position="503"/>
    </location>
</feature>
<feature type="binding site" evidence="1">
    <location>
        <begin position="129"/>
        <end position="135"/>
    </location>
    <ligand>
        <name>ATP</name>
        <dbReference type="ChEBI" id="CHEBI:30616"/>
    </ligand>
</feature>
<proteinExistence type="inferred from homology"/>
<dbReference type="EC" id="6.3.2.9" evidence="1"/>
<dbReference type="EMBL" id="CP000958">
    <property type="protein sequence ID" value="ACA89706.1"/>
    <property type="molecule type" value="Genomic_DNA"/>
</dbReference>
<dbReference type="RefSeq" id="WP_012327851.1">
    <property type="nucleotide sequence ID" value="NC_010508.1"/>
</dbReference>
<dbReference type="SMR" id="B1JV76"/>
<dbReference type="GeneID" id="83047329"/>
<dbReference type="KEGG" id="bcm:Bcenmc03_0528"/>
<dbReference type="HOGENOM" id="CLU_032540_1_1_4"/>
<dbReference type="UniPathway" id="UPA00219"/>
<dbReference type="Proteomes" id="UP000002169">
    <property type="component" value="Chromosome 1"/>
</dbReference>
<dbReference type="GO" id="GO:0005737">
    <property type="term" value="C:cytoplasm"/>
    <property type="evidence" value="ECO:0007669"/>
    <property type="project" value="UniProtKB-SubCell"/>
</dbReference>
<dbReference type="GO" id="GO:0005524">
    <property type="term" value="F:ATP binding"/>
    <property type="evidence" value="ECO:0007669"/>
    <property type="project" value="UniProtKB-UniRule"/>
</dbReference>
<dbReference type="GO" id="GO:0008764">
    <property type="term" value="F:UDP-N-acetylmuramoylalanine-D-glutamate ligase activity"/>
    <property type="evidence" value="ECO:0007669"/>
    <property type="project" value="UniProtKB-UniRule"/>
</dbReference>
<dbReference type="GO" id="GO:0051301">
    <property type="term" value="P:cell division"/>
    <property type="evidence" value="ECO:0007669"/>
    <property type="project" value="UniProtKB-KW"/>
</dbReference>
<dbReference type="GO" id="GO:0071555">
    <property type="term" value="P:cell wall organization"/>
    <property type="evidence" value="ECO:0007669"/>
    <property type="project" value="UniProtKB-KW"/>
</dbReference>
<dbReference type="GO" id="GO:0009252">
    <property type="term" value="P:peptidoglycan biosynthetic process"/>
    <property type="evidence" value="ECO:0007669"/>
    <property type="project" value="UniProtKB-UniRule"/>
</dbReference>
<dbReference type="GO" id="GO:0008360">
    <property type="term" value="P:regulation of cell shape"/>
    <property type="evidence" value="ECO:0007669"/>
    <property type="project" value="UniProtKB-KW"/>
</dbReference>
<dbReference type="Gene3D" id="3.90.190.20">
    <property type="entry name" value="Mur ligase, C-terminal domain"/>
    <property type="match status" value="1"/>
</dbReference>
<dbReference type="Gene3D" id="3.40.1190.10">
    <property type="entry name" value="Mur-like, catalytic domain"/>
    <property type="match status" value="1"/>
</dbReference>
<dbReference type="Gene3D" id="3.40.50.720">
    <property type="entry name" value="NAD(P)-binding Rossmann-like Domain"/>
    <property type="match status" value="1"/>
</dbReference>
<dbReference type="HAMAP" id="MF_00639">
    <property type="entry name" value="MurD"/>
    <property type="match status" value="1"/>
</dbReference>
<dbReference type="InterPro" id="IPR036565">
    <property type="entry name" value="Mur-like_cat_sf"/>
</dbReference>
<dbReference type="InterPro" id="IPR004101">
    <property type="entry name" value="Mur_ligase_C"/>
</dbReference>
<dbReference type="InterPro" id="IPR036615">
    <property type="entry name" value="Mur_ligase_C_dom_sf"/>
</dbReference>
<dbReference type="InterPro" id="IPR013221">
    <property type="entry name" value="Mur_ligase_cen"/>
</dbReference>
<dbReference type="InterPro" id="IPR005762">
    <property type="entry name" value="MurD"/>
</dbReference>
<dbReference type="NCBIfam" id="TIGR01087">
    <property type="entry name" value="murD"/>
    <property type="match status" value="1"/>
</dbReference>
<dbReference type="PANTHER" id="PTHR43692">
    <property type="entry name" value="UDP-N-ACETYLMURAMOYLALANINE--D-GLUTAMATE LIGASE"/>
    <property type="match status" value="1"/>
</dbReference>
<dbReference type="PANTHER" id="PTHR43692:SF1">
    <property type="entry name" value="UDP-N-ACETYLMURAMOYLALANINE--D-GLUTAMATE LIGASE"/>
    <property type="match status" value="1"/>
</dbReference>
<dbReference type="Pfam" id="PF02875">
    <property type="entry name" value="Mur_ligase_C"/>
    <property type="match status" value="1"/>
</dbReference>
<dbReference type="Pfam" id="PF08245">
    <property type="entry name" value="Mur_ligase_M"/>
    <property type="match status" value="1"/>
</dbReference>
<dbReference type="Pfam" id="PF21799">
    <property type="entry name" value="MurD-like_N"/>
    <property type="match status" value="1"/>
</dbReference>
<dbReference type="SUPFAM" id="SSF51984">
    <property type="entry name" value="MurCD N-terminal domain"/>
    <property type="match status" value="1"/>
</dbReference>
<dbReference type="SUPFAM" id="SSF53623">
    <property type="entry name" value="MurD-like peptide ligases, catalytic domain"/>
    <property type="match status" value="1"/>
</dbReference>
<dbReference type="SUPFAM" id="SSF53244">
    <property type="entry name" value="MurD-like peptide ligases, peptide-binding domain"/>
    <property type="match status" value="1"/>
</dbReference>
<organism>
    <name type="scientific">Burkholderia orbicola (strain MC0-3)</name>
    <dbReference type="NCBI Taxonomy" id="406425"/>
    <lineage>
        <taxon>Bacteria</taxon>
        <taxon>Pseudomonadati</taxon>
        <taxon>Pseudomonadota</taxon>
        <taxon>Betaproteobacteria</taxon>
        <taxon>Burkholderiales</taxon>
        <taxon>Burkholderiaceae</taxon>
        <taxon>Burkholderia</taxon>
        <taxon>Burkholderia cepacia complex</taxon>
        <taxon>Burkholderia orbicola</taxon>
    </lineage>
</organism>
<comment type="function">
    <text evidence="1">Cell wall formation. Catalyzes the addition of glutamate to the nucleotide precursor UDP-N-acetylmuramoyl-L-alanine (UMA).</text>
</comment>
<comment type="catalytic activity">
    <reaction evidence="1">
        <text>UDP-N-acetyl-alpha-D-muramoyl-L-alanine + D-glutamate + ATP = UDP-N-acetyl-alpha-D-muramoyl-L-alanyl-D-glutamate + ADP + phosphate + H(+)</text>
        <dbReference type="Rhea" id="RHEA:16429"/>
        <dbReference type="ChEBI" id="CHEBI:15378"/>
        <dbReference type="ChEBI" id="CHEBI:29986"/>
        <dbReference type="ChEBI" id="CHEBI:30616"/>
        <dbReference type="ChEBI" id="CHEBI:43474"/>
        <dbReference type="ChEBI" id="CHEBI:83898"/>
        <dbReference type="ChEBI" id="CHEBI:83900"/>
        <dbReference type="ChEBI" id="CHEBI:456216"/>
        <dbReference type="EC" id="6.3.2.9"/>
    </reaction>
</comment>
<comment type="pathway">
    <text evidence="1">Cell wall biogenesis; peptidoglycan biosynthesis.</text>
</comment>
<comment type="subcellular location">
    <subcellularLocation>
        <location evidence="1">Cytoplasm</location>
    </subcellularLocation>
</comment>
<comment type="similarity">
    <text evidence="1">Belongs to the MurCDEF family.</text>
</comment>
<reference key="1">
    <citation type="submission" date="2008-02" db="EMBL/GenBank/DDBJ databases">
        <title>Complete sequence of chromosome 1 of Burkholderia cenocepacia MC0-3.</title>
        <authorList>
            <person name="Copeland A."/>
            <person name="Lucas S."/>
            <person name="Lapidus A."/>
            <person name="Barry K."/>
            <person name="Bruce D."/>
            <person name="Goodwin L."/>
            <person name="Glavina del Rio T."/>
            <person name="Dalin E."/>
            <person name="Tice H."/>
            <person name="Pitluck S."/>
            <person name="Chain P."/>
            <person name="Malfatti S."/>
            <person name="Shin M."/>
            <person name="Vergez L."/>
            <person name="Schmutz J."/>
            <person name="Larimer F."/>
            <person name="Land M."/>
            <person name="Hauser L."/>
            <person name="Kyrpides N."/>
            <person name="Mikhailova N."/>
            <person name="Tiedje J."/>
            <person name="Richardson P."/>
        </authorList>
    </citation>
    <scope>NUCLEOTIDE SEQUENCE [LARGE SCALE GENOMIC DNA]</scope>
    <source>
        <strain>MC0-3</strain>
    </source>
</reference>
<name>MURD_BURO0</name>
<protein>
    <recommendedName>
        <fullName evidence="1">UDP-N-acetylmuramoylalanine--D-glutamate ligase</fullName>
        <ecNumber evidence="1">6.3.2.9</ecNumber>
    </recommendedName>
    <alternativeName>
        <fullName evidence="1">D-glutamic acid-adding enzyme</fullName>
    </alternativeName>
    <alternativeName>
        <fullName evidence="1">UDP-N-acetylmuramoyl-L-alanyl-D-glutamate synthetase</fullName>
    </alternativeName>
</protein>
<gene>
    <name evidence="1" type="primary">murD</name>
    <name type="ordered locus">Bcenmc03_0528</name>
</gene>
<accession>B1JV76</accession>
<evidence type="ECO:0000255" key="1">
    <source>
        <dbReference type="HAMAP-Rule" id="MF_00639"/>
    </source>
</evidence>
<sequence>MFGDRQRPMVLVLGLGESGLAIARWCARHGCRLRIADTREAPPNLAALQAEGIDAEFVGGAFTPALLDGGIEIVGLSPGLSPLEPALAALVAAANERGVAVWGELEFFAQALRALGTSGYQPKVLAITGTNGKTTTTSLTGLLCQRSGKKVAVAGNISPAMLDRLASAIDETALPDVWVLELSSFQLETARTFAPDAAAILNITQDHLDWHGSFDAYAQAKGLIFGATTTRVLNRDDAAVMKFAPAAGAADAPRTVTFGLNEPTQDGDYGLSRDNGIAWLVEAVDRDAPDEATTTRRRKRDAAHTPDIAQKRLMPADALRIRGLHNAANALAAFALARAIDLPAAPLLHALREYRGEAHRVEVIATIDDVDYVDDSKGTNVGATVAALDGLAQKIVLIAGGDGKGQDFGPLVAPVARWCRAVMLIGRDAPVIRDTLAETGVPLAGHATLEAAVHAAAELAEPGDAVLLSPACASLDMFRNYAHRAEVFRAAVDAIAIDKGATP</sequence>